<comment type="catalytic activity">
    <reaction evidence="1">
        <text>5-dehydro-4-deoxy-D-glucarate + H(+) = 2,5-dioxopentanoate + CO2 + H2O</text>
        <dbReference type="Rhea" id="RHEA:24608"/>
        <dbReference type="ChEBI" id="CHEBI:15377"/>
        <dbReference type="ChEBI" id="CHEBI:15378"/>
        <dbReference type="ChEBI" id="CHEBI:16526"/>
        <dbReference type="ChEBI" id="CHEBI:42819"/>
        <dbReference type="ChEBI" id="CHEBI:58136"/>
        <dbReference type="EC" id="4.2.1.41"/>
    </reaction>
</comment>
<comment type="pathway">
    <text evidence="1">Carbohydrate acid metabolism; D-glucarate degradation; 2,5-dioxopentanoate from D-glucarate: step 2/2.</text>
</comment>
<comment type="similarity">
    <text evidence="1">Belongs to the DapA family.</text>
</comment>
<keyword id="KW-0456">Lyase</keyword>
<keyword id="KW-1185">Reference proteome</keyword>
<proteinExistence type="inferred from homology"/>
<reference key="1">
    <citation type="journal article" date="2002" name="DNA Res.">
        <title>Complete genomic sequence of nitrogen-fixing symbiotic bacterium Bradyrhizobium japonicum USDA110.</title>
        <authorList>
            <person name="Kaneko T."/>
            <person name="Nakamura Y."/>
            <person name="Sato S."/>
            <person name="Minamisawa K."/>
            <person name="Uchiumi T."/>
            <person name="Sasamoto S."/>
            <person name="Watanabe A."/>
            <person name="Idesawa K."/>
            <person name="Iriguchi M."/>
            <person name="Kawashima K."/>
            <person name="Kohara M."/>
            <person name="Matsumoto M."/>
            <person name="Shimpo S."/>
            <person name="Tsuruoka H."/>
            <person name="Wada T."/>
            <person name="Yamada M."/>
            <person name="Tabata S."/>
        </authorList>
    </citation>
    <scope>NUCLEOTIDE SEQUENCE [LARGE SCALE GENOMIC DNA]</scope>
    <source>
        <strain>JCM 10833 / BCRC 13528 / IAM 13628 / NBRC 14792 / USDA 110</strain>
    </source>
</reference>
<sequence>MSKMTPQEMAQTIGSGLLSFPVTPFKADYSFDEATYRANMDWLCGYDVAGLFAAGGTGEFFSLTPTEVPQIVKIAVEETKGRVPVLAGTGYGTAIAREIAVGAEKAGADGLLLLPPYLTHSEQDGLAAHVEAVCAAVKIGVIVYNRDNAILQPDTLARLAERCPNLVGYKDGIGDIELMTRVYTKLGDRLTYIGGLPTAETFALPYLDMGVTTYSSAVFNFVPEFATNFYAAVRKRDHATIHAGLKDFILPLIAIRNRKKGYAVSIIKAGMKVIGRDSGPVRPPLTDLTEQEIAELTALVKKLPAIRSSQQAAE</sequence>
<accession>Q89HW8</accession>
<gene>
    <name type="ordered locus">blr5871</name>
</gene>
<name>KDGD_BRADU</name>
<organism>
    <name type="scientific">Bradyrhizobium diazoefficiens (strain JCM 10833 / BCRC 13528 / IAM 13628 / NBRC 14792 / USDA 110)</name>
    <dbReference type="NCBI Taxonomy" id="224911"/>
    <lineage>
        <taxon>Bacteria</taxon>
        <taxon>Pseudomonadati</taxon>
        <taxon>Pseudomonadota</taxon>
        <taxon>Alphaproteobacteria</taxon>
        <taxon>Hyphomicrobiales</taxon>
        <taxon>Nitrobacteraceae</taxon>
        <taxon>Bradyrhizobium</taxon>
    </lineage>
</organism>
<dbReference type="EC" id="4.2.1.41" evidence="1"/>
<dbReference type="EMBL" id="BA000040">
    <property type="protein sequence ID" value="BAC51136.1"/>
    <property type="molecule type" value="Genomic_DNA"/>
</dbReference>
<dbReference type="RefSeq" id="NP_772511.1">
    <property type="nucleotide sequence ID" value="NC_004463.1"/>
</dbReference>
<dbReference type="RefSeq" id="WP_011088612.1">
    <property type="nucleotide sequence ID" value="NC_004463.1"/>
</dbReference>
<dbReference type="SMR" id="Q89HW8"/>
<dbReference type="STRING" id="224911.AAV28_26890"/>
<dbReference type="EnsemblBacteria" id="BAC51136">
    <property type="protein sequence ID" value="BAC51136"/>
    <property type="gene ID" value="BAC51136"/>
</dbReference>
<dbReference type="GeneID" id="46492869"/>
<dbReference type="KEGG" id="bja:blr5871"/>
<dbReference type="PATRIC" id="fig|224911.44.peg.5817"/>
<dbReference type="eggNOG" id="COG0329">
    <property type="taxonomic scope" value="Bacteria"/>
</dbReference>
<dbReference type="HOGENOM" id="CLU_049343_5_2_5"/>
<dbReference type="InParanoid" id="Q89HW8"/>
<dbReference type="OrthoDB" id="8995637at2"/>
<dbReference type="PhylomeDB" id="Q89HW8"/>
<dbReference type="UniPathway" id="UPA00564">
    <property type="reaction ID" value="UER00628"/>
</dbReference>
<dbReference type="Proteomes" id="UP000002526">
    <property type="component" value="Chromosome"/>
</dbReference>
<dbReference type="GO" id="GO:0008840">
    <property type="term" value="F:4-hydroxy-tetrahydrodipicolinate synthase activity"/>
    <property type="evidence" value="ECO:0000318"/>
    <property type="project" value="GO_Central"/>
</dbReference>
<dbReference type="GO" id="GO:0047448">
    <property type="term" value="F:5-dehydro-4-deoxyglucarate dehydratase activity"/>
    <property type="evidence" value="ECO:0007669"/>
    <property type="project" value="UniProtKB-UniRule"/>
</dbReference>
<dbReference type="GO" id="GO:0042838">
    <property type="term" value="P:D-glucarate catabolic process"/>
    <property type="evidence" value="ECO:0007669"/>
    <property type="project" value="UniProtKB-UniRule"/>
</dbReference>
<dbReference type="CDD" id="cd00951">
    <property type="entry name" value="KDGDH"/>
    <property type="match status" value="1"/>
</dbReference>
<dbReference type="Gene3D" id="3.20.20.70">
    <property type="entry name" value="Aldolase class I"/>
    <property type="match status" value="1"/>
</dbReference>
<dbReference type="HAMAP" id="MF_00694">
    <property type="entry name" value="KDGDH"/>
    <property type="match status" value="1"/>
</dbReference>
<dbReference type="InterPro" id="IPR013785">
    <property type="entry name" value="Aldolase_TIM"/>
</dbReference>
<dbReference type="InterPro" id="IPR002220">
    <property type="entry name" value="DapA-like"/>
</dbReference>
<dbReference type="InterPro" id="IPR017655">
    <property type="entry name" value="Dehydro-deoxyglucarate_dehyd"/>
</dbReference>
<dbReference type="NCBIfam" id="TIGR03249">
    <property type="entry name" value="KdgD"/>
    <property type="match status" value="1"/>
</dbReference>
<dbReference type="NCBIfam" id="NF002958">
    <property type="entry name" value="PRK03620.1"/>
    <property type="match status" value="1"/>
</dbReference>
<dbReference type="PANTHER" id="PTHR12128:SF19">
    <property type="entry name" value="5-DEHYDRO-4-DEOXYGLUCARATE DEHYDRATASE 2-RELATED"/>
    <property type="match status" value="1"/>
</dbReference>
<dbReference type="PANTHER" id="PTHR12128">
    <property type="entry name" value="DIHYDRODIPICOLINATE SYNTHASE"/>
    <property type="match status" value="1"/>
</dbReference>
<dbReference type="Pfam" id="PF00701">
    <property type="entry name" value="DHDPS"/>
    <property type="match status" value="1"/>
</dbReference>
<dbReference type="PIRSF" id="PIRSF001365">
    <property type="entry name" value="DHDPS"/>
    <property type="match status" value="1"/>
</dbReference>
<dbReference type="SMART" id="SM01130">
    <property type="entry name" value="DHDPS"/>
    <property type="match status" value="1"/>
</dbReference>
<dbReference type="SUPFAM" id="SSF51569">
    <property type="entry name" value="Aldolase"/>
    <property type="match status" value="1"/>
</dbReference>
<feature type="chain" id="PRO_0000103231" description="Probable 5-dehydro-4-deoxyglucarate dehydratase">
    <location>
        <begin position="1"/>
        <end position="314"/>
    </location>
</feature>
<protein>
    <recommendedName>
        <fullName evidence="1">Probable 5-dehydro-4-deoxyglucarate dehydratase</fullName>
        <ecNumber evidence="1">4.2.1.41</ecNumber>
    </recommendedName>
    <alternativeName>
        <fullName evidence="1">5-keto-4-deoxy-glucarate dehydratase</fullName>
        <shortName evidence="1">KDGDH</shortName>
    </alternativeName>
</protein>
<evidence type="ECO:0000255" key="1">
    <source>
        <dbReference type="HAMAP-Rule" id="MF_00694"/>
    </source>
</evidence>